<keyword id="KW-0119">Carbohydrate metabolism</keyword>
<keyword id="KW-0413">Isomerase</keyword>
<keyword id="KW-0479">Metal-binding</keyword>
<keyword id="KW-1185">Reference proteome</keyword>
<accession>O66107</accession>
<sequence length="218" mass="23514">MERSFTLAPSLLSADFSALDRALVYLEAHGAQWVHLDVMDGHFVPNLTFGAPVLRCLRSKTHLPFDVHLMVSRPADLIEDFVQAGADFLTFHIEAEVHAHRLIHAIRGRGVKVGISLVPSTPVAALSEVLPFVDLVLVMTVNPGFSGQQMIAHCLSKVSALVQMRTERGYSYMISVDGGIDCRTLPQALDAGADVIVSGSAFFSGTLRSLLCKDSSGA</sequence>
<proteinExistence type="inferred from homology"/>
<organism>
    <name type="scientific">Treponema pallidum (strain Nichols)</name>
    <dbReference type="NCBI Taxonomy" id="243276"/>
    <lineage>
        <taxon>Bacteria</taxon>
        <taxon>Pseudomonadati</taxon>
        <taxon>Spirochaetota</taxon>
        <taxon>Spirochaetia</taxon>
        <taxon>Spirochaetales</taxon>
        <taxon>Treponemataceae</taxon>
        <taxon>Treponema</taxon>
    </lineage>
</organism>
<name>RPE_TREPA</name>
<comment type="function">
    <text evidence="1">Catalyzes the reversible epimerization of D-ribulose 5-phosphate to D-xylulose 5-phosphate.</text>
</comment>
<comment type="catalytic activity">
    <reaction evidence="1">
        <text>D-ribulose 5-phosphate = D-xylulose 5-phosphate</text>
        <dbReference type="Rhea" id="RHEA:13677"/>
        <dbReference type="ChEBI" id="CHEBI:57737"/>
        <dbReference type="ChEBI" id="CHEBI:58121"/>
        <dbReference type="EC" id="5.1.3.1"/>
    </reaction>
</comment>
<comment type="cofactor">
    <cofactor evidence="1">
        <name>a divalent metal cation</name>
        <dbReference type="ChEBI" id="CHEBI:60240"/>
    </cofactor>
    <text evidence="1">Binds 1 divalent metal cation per subunit.</text>
</comment>
<comment type="pathway">
    <text evidence="1">Carbohydrate degradation.</text>
</comment>
<comment type="similarity">
    <text evidence="1">Belongs to the ribulose-phosphate 3-epimerase family.</text>
</comment>
<gene>
    <name evidence="1" type="primary">rpe</name>
    <name type="ordered locus">TP_0945</name>
</gene>
<reference key="1">
    <citation type="submission" date="1997-04" db="EMBL/GenBank/DDBJ databases">
        <authorList>
            <person name="Shevchenko D.V."/>
            <person name="Akins D.R."/>
            <person name="Radolf J.D."/>
        </authorList>
    </citation>
    <scope>NUCLEOTIDE SEQUENCE [GENOMIC DNA]</scope>
</reference>
<reference key="2">
    <citation type="journal article" date="1998" name="Science">
        <title>Complete genome sequence of Treponema pallidum, the syphilis spirochete.</title>
        <authorList>
            <person name="Fraser C.M."/>
            <person name="Norris S.J."/>
            <person name="Weinstock G.M."/>
            <person name="White O."/>
            <person name="Sutton G.G."/>
            <person name="Dodson R.J."/>
            <person name="Gwinn M.L."/>
            <person name="Hickey E.K."/>
            <person name="Clayton R.A."/>
            <person name="Ketchum K.A."/>
            <person name="Sodergren E."/>
            <person name="Hardham J.M."/>
            <person name="McLeod M.P."/>
            <person name="Salzberg S.L."/>
            <person name="Peterson J.D."/>
            <person name="Khalak H.G."/>
            <person name="Richardson D.L."/>
            <person name="Howell J.K."/>
            <person name="Chidambaram M."/>
            <person name="Utterback T.R."/>
            <person name="McDonald L.A."/>
            <person name="Artiach P."/>
            <person name="Bowman C."/>
            <person name="Cotton M.D."/>
            <person name="Fujii C."/>
            <person name="Garland S.A."/>
            <person name="Hatch B."/>
            <person name="Horst K."/>
            <person name="Roberts K.M."/>
            <person name="Sandusky M."/>
            <person name="Weidman J.F."/>
            <person name="Smith H.O."/>
            <person name="Venter J.C."/>
        </authorList>
    </citation>
    <scope>NUCLEOTIDE SEQUENCE [LARGE SCALE GENOMIC DNA]</scope>
    <source>
        <strain>Nichols</strain>
    </source>
</reference>
<evidence type="ECO:0000255" key="1">
    <source>
        <dbReference type="HAMAP-Rule" id="MF_02227"/>
    </source>
</evidence>
<protein>
    <recommendedName>
        <fullName evidence="1">Ribulose-phosphate 3-epimerase</fullName>
        <ecNumber evidence="1">5.1.3.1</ecNumber>
    </recommendedName>
</protein>
<feature type="chain" id="PRO_0000171583" description="Ribulose-phosphate 3-epimerase">
    <location>
        <begin position="1"/>
        <end position="218"/>
    </location>
</feature>
<feature type="active site" description="Proton acceptor" evidence="1">
    <location>
        <position position="37"/>
    </location>
</feature>
<feature type="active site" description="Proton donor" evidence="1">
    <location>
        <position position="177"/>
    </location>
</feature>
<feature type="binding site" evidence="1">
    <location>
        <position position="10"/>
    </location>
    <ligand>
        <name>substrate</name>
    </ligand>
</feature>
<feature type="binding site" evidence="1">
    <location>
        <position position="35"/>
    </location>
    <ligand>
        <name>a divalent metal cation</name>
        <dbReference type="ChEBI" id="CHEBI:60240"/>
    </ligand>
</feature>
<feature type="binding site" evidence="1">
    <location>
        <position position="37"/>
    </location>
    <ligand>
        <name>a divalent metal cation</name>
        <dbReference type="ChEBI" id="CHEBI:60240"/>
    </ligand>
</feature>
<feature type="binding site" evidence="1">
    <location>
        <position position="68"/>
    </location>
    <ligand>
        <name>a divalent metal cation</name>
        <dbReference type="ChEBI" id="CHEBI:60240"/>
    </ligand>
</feature>
<feature type="binding site" evidence="1">
    <location>
        <position position="68"/>
    </location>
    <ligand>
        <name>substrate</name>
    </ligand>
</feature>
<feature type="binding site" evidence="1">
    <location>
        <begin position="144"/>
        <end position="147"/>
    </location>
    <ligand>
        <name>substrate</name>
    </ligand>
</feature>
<feature type="binding site" evidence="1">
    <location>
        <begin position="177"/>
        <end position="179"/>
    </location>
    <ligand>
        <name>substrate</name>
    </ligand>
</feature>
<feature type="binding site" evidence="1">
    <location>
        <position position="177"/>
    </location>
    <ligand>
        <name>a divalent metal cation</name>
        <dbReference type="ChEBI" id="CHEBI:60240"/>
    </ligand>
</feature>
<feature type="binding site" evidence="1">
    <location>
        <begin position="199"/>
        <end position="200"/>
    </location>
    <ligand>
        <name>substrate</name>
    </ligand>
</feature>
<dbReference type="EC" id="5.1.3.1" evidence="1"/>
<dbReference type="EMBL" id="U97573">
    <property type="protein sequence ID" value="AAC08057.1"/>
    <property type="molecule type" value="Genomic_DNA"/>
</dbReference>
<dbReference type="EMBL" id="AE000520">
    <property type="protein sequence ID" value="AAC65902.1"/>
    <property type="molecule type" value="Genomic_DNA"/>
</dbReference>
<dbReference type="PIR" id="G71260">
    <property type="entry name" value="G71260"/>
</dbReference>
<dbReference type="RefSeq" id="WP_010882388.1">
    <property type="nucleotide sequence ID" value="NC_021490.2"/>
</dbReference>
<dbReference type="SMR" id="O66107"/>
<dbReference type="IntAct" id="O66107">
    <property type="interactions" value="22"/>
</dbReference>
<dbReference type="STRING" id="243276.TP_0945"/>
<dbReference type="EnsemblBacteria" id="AAC65902">
    <property type="protein sequence ID" value="AAC65902"/>
    <property type="gene ID" value="TP_0945"/>
</dbReference>
<dbReference type="GeneID" id="93876693"/>
<dbReference type="KEGG" id="tpa:TP_0945"/>
<dbReference type="KEGG" id="tpw:TPANIC_0945"/>
<dbReference type="eggNOG" id="COG0036">
    <property type="taxonomic scope" value="Bacteria"/>
</dbReference>
<dbReference type="HOGENOM" id="CLU_054856_2_1_12"/>
<dbReference type="OrthoDB" id="1645589at2"/>
<dbReference type="Proteomes" id="UP000000811">
    <property type="component" value="Chromosome"/>
</dbReference>
<dbReference type="GO" id="GO:0004750">
    <property type="term" value="F:D-ribulose-phosphate 3-epimerase activity"/>
    <property type="evidence" value="ECO:0007669"/>
    <property type="project" value="UniProtKB-UniRule"/>
</dbReference>
<dbReference type="GO" id="GO:0046872">
    <property type="term" value="F:metal ion binding"/>
    <property type="evidence" value="ECO:0007669"/>
    <property type="project" value="UniProtKB-UniRule"/>
</dbReference>
<dbReference type="GO" id="GO:0019323">
    <property type="term" value="P:pentose catabolic process"/>
    <property type="evidence" value="ECO:0007669"/>
    <property type="project" value="UniProtKB-UniRule"/>
</dbReference>
<dbReference type="GO" id="GO:0006098">
    <property type="term" value="P:pentose-phosphate shunt"/>
    <property type="evidence" value="ECO:0007669"/>
    <property type="project" value="InterPro"/>
</dbReference>
<dbReference type="CDD" id="cd00429">
    <property type="entry name" value="RPE"/>
    <property type="match status" value="1"/>
</dbReference>
<dbReference type="FunFam" id="3.20.20.70:FF:000004">
    <property type="entry name" value="Ribulose-phosphate 3-epimerase"/>
    <property type="match status" value="1"/>
</dbReference>
<dbReference type="Gene3D" id="3.20.20.70">
    <property type="entry name" value="Aldolase class I"/>
    <property type="match status" value="1"/>
</dbReference>
<dbReference type="HAMAP" id="MF_02227">
    <property type="entry name" value="RPE"/>
    <property type="match status" value="1"/>
</dbReference>
<dbReference type="InterPro" id="IPR013785">
    <property type="entry name" value="Aldolase_TIM"/>
</dbReference>
<dbReference type="InterPro" id="IPR026019">
    <property type="entry name" value="Ribul_P_3_epim"/>
</dbReference>
<dbReference type="InterPro" id="IPR000056">
    <property type="entry name" value="Ribul_P_3_epim-like"/>
</dbReference>
<dbReference type="InterPro" id="IPR011060">
    <property type="entry name" value="RibuloseP-bd_barrel"/>
</dbReference>
<dbReference type="NCBIfam" id="NF004076">
    <property type="entry name" value="PRK05581.1-4"/>
    <property type="match status" value="1"/>
</dbReference>
<dbReference type="NCBIfam" id="TIGR01163">
    <property type="entry name" value="rpe"/>
    <property type="match status" value="1"/>
</dbReference>
<dbReference type="PANTHER" id="PTHR11749">
    <property type="entry name" value="RIBULOSE-5-PHOSPHATE-3-EPIMERASE"/>
    <property type="match status" value="1"/>
</dbReference>
<dbReference type="Pfam" id="PF00834">
    <property type="entry name" value="Ribul_P_3_epim"/>
    <property type="match status" value="1"/>
</dbReference>
<dbReference type="PIRSF" id="PIRSF001461">
    <property type="entry name" value="RPE"/>
    <property type="match status" value="1"/>
</dbReference>
<dbReference type="SUPFAM" id="SSF51366">
    <property type="entry name" value="Ribulose-phoshate binding barrel"/>
    <property type="match status" value="1"/>
</dbReference>
<dbReference type="PROSITE" id="PS01085">
    <property type="entry name" value="RIBUL_P_3_EPIMER_1"/>
    <property type="match status" value="1"/>
</dbReference>
<dbReference type="PROSITE" id="PS01086">
    <property type="entry name" value="RIBUL_P_3_EPIMER_2"/>
    <property type="match status" value="1"/>
</dbReference>